<comment type="function">
    <text evidence="1">Catalyzes the base-exchange of a guanine (G) residue with the queuine precursor 7-aminomethyl-7-deazaguanine (PreQ1) at position 34 (anticodon wobble position) in tRNAs with GU(N) anticodons (tRNA-Asp, -Asn, -His and -Tyr). Catalysis occurs through a double-displacement mechanism. The nucleophile active site attacks the C1' of nucleotide 34 to detach the guanine base from the RNA, forming a covalent enzyme-RNA intermediate. The proton acceptor active site deprotonates the incoming PreQ1, allowing a nucleophilic attack on the C1' of the ribose to form the product. After dissociation, two additional enzymatic reactions on the tRNA convert PreQ1 to queuine (Q), resulting in the hypermodified nucleoside queuosine (7-(((4,5-cis-dihydroxy-2-cyclopenten-1-yl)amino)methyl)-7-deazaguanosine).</text>
</comment>
<comment type="catalytic activity">
    <reaction evidence="1">
        <text>7-aminomethyl-7-carbaguanine + guanosine(34) in tRNA = 7-aminomethyl-7-carbaguanosine(34) in tRNA + guanine</text>
        <dbReference type="Rhea" id="RHEA:24104"/>
        <dbReference type="Rhea" id="RHEA-COMP:10341"/>
        <dbReference type="Rhea" id="RHEA-COMP:10342"/>
        <dbReference type="ChEBI" id="CHEBI:16235"/>
        <dbReference type="ChEBI" id="CHEBI:58703"/>
        <dbReference type="ChEBI" id="CHEBI:74269"/>
        <dbReference type="ChEBI" id="CHEBI:82833"/>
        <dbReference type="EC" id="2.4.2.29"/>
    </reaction>
</comment>
<comment type="cofactor">
    <cofactor evidence="1">
        <name>Zn(2+)</name>
        <dbReference type="ChEBI" id="CHEBI:29105"/>
    </cofactor>
    <text evidence="1">Binds 1 zinc ion per subunit.</text>
</comment>
<comment type="pathway">
    <text evidence="1">tRNA modification; tRNA-queuosine biosynthesis.</text>
</comment>
<comment type="subunit">
    <text evidence="1">Homodimer. Within each dimer, one monomer is responsible for RNA recognition and catalysis, while the other monomer binds to the replacement base PreQ1.</text>
</comment>
<comment type="similarity">
    <text evidence="1">Belongs to the queuine tRNA-ribosyltransferase family.</text>
</comment>
<dbReference type="EC" id="2.4.2.29" evidence="1"/>
<dbReference type="EMBL" id="CP001139">
    <property type="protein sequence ID" value="ACH65457.1"/>
    <property type="molecule type" value="Genomic_DNA"/>
</dbReference>
<dbReference type="RefSeq" id="WP_005420569.1">
    <property type="nucleotide sequence ID" value="NC_011184.1"/>
</dbReference>
<dbReference type="SMR" id="B5F9Y3"/>
<dbReference type="GeneID" id="54164665"/>
<dbReference type="KEGG" id="vfm:VFMJ11_2103"/>
<dbReference type="HOGENOM" id="CLU_022060_0_1_6"/>
<dbReference type="UniPathway" id="UPA00392"/>
<dbReference type="Proteomes" id="UP000001857">
    <property type="component" value="Chromosome I"/>
</dbReference>
<dbReference type="GO" id="GO:0005829">
    <property type="term" value="C:cytosol"/>
    <property type="evidence" value="ECO:0007669"/>
    <property type="project" value="TreeGrafter"/>
</dbReference>
<dbReference type="GO" id="GO:0046872">
    <property type="term" value="F:metal ion binding"/>
    <property type="evidence" value="ECO:0007669"/>
    <property type="project" value="UniProtKB-KW"/>
</dbReference>
<dbReference type="GO" id="GO:0008479">
    <property type="term" value="F:tRNA-guanosine(34) queuine transglycosylase activity"/>
    <property type="evidence" value="ECO:0007669"/>
    <property type="project" value="UniProtKB-UniRule"/>
</dbReference>
<dbReference type="GO" id="GO:0008616">
    <property type="term" value="P:queuosine biosynthetic process"/>
    <property type="evidence" value="ECO:0007669"/>
    <property type="project" value="UniProtKB-UniRule"/>
</dbReference>
<dbReference type="GO" id="GO:0002099">
    <property type="term" value="P:tRNA wobble guanine modification"/>
    <property type="evidence" value="ECO:0007669"/>
    <property type="project" value="TreeGrafter"/>
</dbReference>
<dbReference type="GO" id="GO:0101030">
    <property type="term" value="P:tRNA-guanine transglycosylation"/>
    <property type="evidence" value="ECO:0007669"/>
    <property type="project" value="InterPro"/>
</dbReference>
<dbReference type="FunFam" id="3.20.20.105:FF:000001">
    <property type="entry name" value="Queuine tRNA-ribosyltransferase"/>
    <property type="match status" value="1"/>
</dbReference>
<dbReference type="Gene3D" id="3.20.20.105">
    <property type="entry name" value="Queuine tRNA-ribosyltransferase-like"/>
    <property type="match status" value="1"/>
</dbReference>
<dbReference type="HAMAP" id="MF_00168">
    <property type="entry name" value="Q_tRNA_Tgt"/>
    <property type="match status" value="1"/>
</dbReference>
<dbReference type="InterPro" id="IPR050076">
    <property type="entry name" value="ArchSynthase1/Queuine_TRR"/>
</dbReference>
<dbReference type="InterPro" id="IPR004803">
    <property type="entry name" value="TGT"/>
</dbReference>
<dbReference type="InterPro" id="IPR036511">
    <property type="entry name" value="TGT-like_sf"/>
</dbReference>
<dbReference type="InterPro" id="IPR002616">
    <property type="entry name" value="tRNA_ribo_trans-like"/>
</dbReference>
<dbReference type="NCBIfam" id="TIGR00430">
    <property type="entry name" value="Q_tRNA_tgt"/>
    <property type="match status" value="1"/>
</dbReference>
<dbReference type="NCBIfam" id="TIGR00449">
    <property type="entry name" value="tgt_general"/>
    <property type="match status" value="1"/>
</dbReference>
<dbReference type="PANTHER" id="PTHR46499">
    <property type="entry name" value="QUEUINE TRNA-RIBOSYLTRANSFERASE"/>
    <property type="match status" value="1"/>
</dbReference>
<dbReference type="PANTHER" id="PTHR46499:SF1">
    <property type="entry name" value="QUEUINE TRNA-RIBOSYLTRANSFERASE"/>
    <property type="match status" value="1"/>
</dbReference>
<dbReference type="Pfam" id="PF01702">
    <property type="entry name" value="TGT"/>
    <property type="match status" value="1"/>
</dbReference>
<dbReference type="SUPFAM" id="SSF51713">
    <property type="entry name" value="tRNA-guanine transglycosylase"/>
    <property type="match status" value="1"/>
</dbReference>
<reference key="1">
    <citation type="submission" date="2008-08" db="EMBL/GenBank/DDBJ databases">
        <title>Complete sequence of Vibrio fischeri strain MJ11.</title>
        <authorList>
            <person name="Mandel M.J."/>
            <person name="Stabb E.V."/>
            <person name="Ruby E.G."/>
            <person name="Ferriera S."/>
            <person name="Johnson J."/>
            <person name="Kravitz S."/>
            <person name="Beeson K."/>
            <person name="Sutton G."/>
            <person name="Rogers Y.-H."/>
            <person name="Friedman R."/>
            <person name="Frazier M."/>
            <person name="Venter J.C."/>
        </authorList>
    </citation>
    <scope>NUCLEOTIDE SEQUENCE [LARGE SCALE GENOMIC DNA]</scope>
    <source>
        <strain>MJ11</strain>
    </source>
</reference>
<proteinExistence type="inferred from homology"/>
<protein>
    <recommendedName>
        <fullName evidence="1">Queuine tRNA-ribosyltransferase</fullName>
        <ecNumber evidence="1">2.4.2.29</ecNumber>
    </recommendedName>
    <alternativeName>
        <fullName evidence="1">Guanine insertion enzyme</fullName>
    </alternativeName>
    <alternativeName>
        <fullName evidence="1">tRNA-guanine transglycosylase</fullName>
    </alternativeName>
</protein>
<gene>
    <name evidence="1" type="primary">tgt</name>
    <name type="ordered locus">VFMJ11_2103</name>
</gene>
<sequence length="375" mass="42912">MKYELIKKQGRARRGQLQFDRGTVETPAFMPVGTYGTVKGMTPEEVKGTGAEILLGNTFHLWLRPGQEIMKLHGDLHDFMNWKGPILTDSGGFQVFSLGKTRKITEEGVHFRSPVNGDKIFMDAEKSMQIQYDLGSDVVMIFDECTPYPATHDEARISMERSIRWAERSRNEFDRQENPNALFGIVQGGVYEDLRDVSVEALTKIGFDGYAVGGLAVGEPKEDMHRILEHTCPQLPEDKPRYLMGVGKPEDLVEGVRRGIDMFDCVMPTRNARNGHLFVTGGVIKIRNAKHKTDTTPLDPECDCYTCQNYSKSYLHHLDRCNEILGARLNTIHNLRYYQRIMASIRKALEEDRFEQFVEEFYARRDREVPPLKDL</sequence>
<name>TGT_ALIFM</name>
<accession>B5F9Y3</accession>
<evidence type="ECO:0000255" key="1">
    <source>
        <dbReference type="HAMAP-Rule" id="MF_00168"/>
    </source>
</evidence>
<feature type="chain" id="PRO_1000097576" description="Queuine tRNA-ribosyltransferase">
    <location>
        <begin position="1"/>
        <end position="375"/>
    </location>
</feature>
<feature type="region of interest" description="RNA binding" evidence="1">
    <location>
        <begin position="245"/>
        <end position="251"/>
    </location>
</feature>
<feature type="region of interest" description="RNA binding; important for wobble base 34 recognition" evidence="1">
    <location>
        <begin position="269"/>
        <end position="273"/>
    </location>
</feature>
<feature type="active site" description="Proton acceptor" evidence="1">
    <location>
        <position position="89"/>
    </location>
</feature>
<feature type="active site" description="Nucleophile" evidence="1">
    <location>
        <position position="264"/>
    </location>
</feature>
<feature type="binding site" evidence="1">
    <location>
        <begin position="89"/>
        <end position="93"/>
    </location>
    <ligand>
        <name>substrate</name>
    </ligand>
</feature>
<feature type="binding site" evidence="1">
    <location>
        <position position="143"/>
    </location>
    <ligand>
        <name>substrate</name>
    </ligand>
</feature>
<feature type="binding site" evidence="1">
    <location>
        <position position="187"/>
    </location>
    <ligand>
        <name>substrate</name>
    </ligand>
</feature>
<feature type="binding site" evidence="1">
    <location>
        <position position="214"/>
    </location>
    <ligand>
        <name>substrate</name>
    </ligand>
</feature>
<feature type="binding site" evidence="1">
    <location>
        <position position="302"/>
    </location>
    <ligand>
        <name>Zn(2+)</name>
        <dbReference type="ChEBI" id="CHEBI:29105"/>
    </ligand>
</feature>
<feature type="binding site" evidence="1">
    <location>
        <position position="304"/>
    </location>
    <ligand>
        <name>Zn(2+)</name>
        <dbReference type="ChEBI" id="CHEBI:29105"/>
    </ligand>
</feature>
<feature type="binding site" evidence="1">
    <location>
        <position position="307"/>
    </location>
    <ligand>
        <name>Zn(2+)</name>
        <dbReference type="ChEBI" id="CHEBI:29105"/>
    </ligand>
</feature>
<feature type="binding site" evidence="1">
    <location>
        <position position="333"/>
    </location>
    <ligand>
        <name>Zn(2+)</name>
        <dbReference type="ChEBI" id="CHEBI:29105"/>
    </ligand>
</feature>
<keyword id="KW-0328">Glycosyltransferase</keyword>
<keyword id="KW-0479">Metal-binding</keyword>
<keyword id="KW-0671">Queuosine biosynthesis</keyword>
<keyword id="KW-0808">Transferase</keyword>
<keyword id="KW-0819">tRNA processing</keyword>
<keyword id="KW-0862">Zinc</keyword>
<organism>
    <name type="scientific">Aliivibrio fischeri (strain MJ11)</name>
    <name type="common">Vibrio fischeri</name>
    <dbReference type="NCBI Taxonomy" id="388396"/>
    <lineage>
        <taxon>Bacteria</taxon>
        <taxon>Pseudomonadati</taxon>
        <taxon>Pseudomonadota</taxon>
        <taxon>Gammaproteobacteria</taxon>
        <taxon>Vibrionales</taxon>
        <taxon>Vibrionaceae</taxon>
        <taxon>Aliivibrio</taxon>
    </lineage>
</organism>